<dbReference type="EMBL" id="CP000247">
    <property type="protein sequence ID" value="ABG71908.1"/>
    <property type="molecule type" value="Genomic_DNA"/>
</dbReference>
<dbReference type="RefSeq" id="WP_000135618.1">
    <property type="nucleotide sequence ID" value="NC_008253.1"/>
</dbReference>
<dbReference type="SMR" id="Q0TAX1"/>
<dbReference type="GeneID" id="86948620"/>
<dbReference type="KEGG" id="ecp:ECP_3937"/>
<dbReference type="HOGENOM" id="CLU_041018_1_0_6"/>
<dbReference type="Proteomes" id="UP000009182">
    <property type="component" value="Chromosome"/>
</dbReference>
<dbReference type="GO" id="GO:0005886">
    <property type="term" value="C:plasma membrane"/>
    <property type="evidence" value="ECO:0007669"/>
    <property type="project" value="UniProtKB-SubCell"/>
</dbReference>
<dbReference type="GO" id="GO:0045259">
    <property type="term" value="C:proton-transporting ATP synthase complex"/>
    <property type="evidence" value="ECO:0007669"/>
    <property type="project" value="UniProtKB-KW"/>
</dbReference>
<dbReference type="GO" id="GO:0046933">
    <property type="term" value="F:proton-transporting ATP synthase activity, rotational mechanism"/>
    <property type="evidence" value="ECO:0007669"/>
    <property type="project" value="UniProtKB-UniRule"/>
</dbReference>
<dbReference type="GO" id="GO:0042777">
    <property type="term" value="P:proton motive force-driven plasma membrane ATP synthesis"/>
    <property type="evidence" value="ECO:0007669"/>
    <property type="project" value="TreeGrafter"/>
</dbReference>
<dbReference type="CDD" id="cd00310">
    <property type="entry name" value="ATP-synt_Fo_a_6"/>
    <property type="match status" value="1"/>
</dbReference>
<dbReference type="FunFam" id="1.20.120.220:FF:000002">
    <property type="entry name" value="ATP synthase subunit a"/>
    <property type="match status" value="1"/>
</dbReference>
<dbReference type="Gene3D" id="1.20.120.220">
    <property type="entry name" value="ATP synthase, F0 complex, subunit A"/>
    <property type="match status" value="1"/>
</dbReference>
<dbReference type="HAMAP" id="MF_01393">
    <property type="entry name" value="ATP_synth_a_bact"/>
    <property type="match status" value="1"/>
</dbReference>
<dbReference type="InterPro" id="IPR045082">
    <property type="entry name" value="ATP_syn_F0_a_bact/chloroplast"/>
</dbReference>
<dbReference type="InterPro" id="IPR000568">
    <property type="entry name" value="ATP_synth_F0_asu"/>
</dbReference>
<dbReference type="InterPro" id="IPR023011">
    <property type="entry name" value="ATP_synth_F0_asu_AS"/>
</dbReference>
<dbReference type="InterPro" id="IPR035908">
    <property type="entry name" value="F0_ATP_A_sf"/>
</dbReference>
<dbReference type="NCBIfam" id="TIGR01131">
    <property type="entry name" value="ATP_synt_6_or_A"/>
    <property type="match status" value="1"/>
</dbReference>
<dbReference type="NCBIfam" id="NF004477">
    <property type="entry name" value="PRK05815.1-1"/>
    <property type="match status" value="1"/>
</dbReference>
<dbReference type="PANTHER" id="PTHR42823">
    <property type="entry name" value="ATP SYNTHASE SUBUNIT A, CHLOROPLASTIC"/>
    <property type="match status" value="1"/>
</dbReference>
<dbReference type="PANTHER" id="PTHR42823:SF3">
    <property type="entry name" value="ATP SYNTHASE SUBUNIT A, CHLOROPLASTIC"/>
    <property type="match status" value="1"/>
</dbReference>
<dbReference type="Pfam" id="PF00119">
    <property type="entry name" value="ATP-synt_A"/>
    <property type="match status" value="1"/>
</dbReference>
<dbReference type="PRINTS" id="PR00123">
    <property type="entry name" value="ATPASEA"/>
</dbReference>
<dbReference type="SUPFAM" id="SSF81336">
    <property type="entry name" value="F1F0 ATP synthase subunit A"/>
    <property type="match status" value="1"/>
</dbReference>
<dbReference type="PROSITE" id="PS00449">
    <property type="entry name" value="ATPASE_A"/>
    <property type="match status" value="1"/>
</dbReference>
<organism>
    <name type="scientific">Escherichia coli O6:K15:H31 (strain 536 / UPEC)</name>
    <dbReference type="NCBI Taxonomy" id="362663"/>
    <lineage>
        <taxon>Bacteria</taxon>
        <taxon>Pseudomonadati</taxon>
        <taxon>Pseudomonadota</taxon>
        <taxon>Gammaproteobacteria</taxon>
        <taxon>Enterobacterales</taxon>
        <taxon>Enterobacteriaceae</taxon>
        <taxon>Escherichia</taxon>
    </lineage>
</organism>
<name>ATP6_ECOL5</name>
<gene>
    <name evidence="1" type="primary">atpB</name>
    <name type="ordered locus">ECP_3937</name>
</gene>
<reference key="1">
    <citation type="journal article" date="2006" name="Mol. Microbiol.">
        <title>Role of pathogenicity island-associated integrases in the genome plasticity of uropathogenic Escherichia coli strain 536.</title>
        <authorList>
            <person name="Hochhut B."/>
            <person name="Wilde C."/>
            <person name="Balling G."/>
            <person name="Middendorf B."/>
            <person name="Dobrindt U."/>
            <person name="Brzuszkiewicz E."/>
            <person name="Gottschalk G."/>
            <person name="Carniel E."/>
            <person name="Hacker J."/>
        </authorList>
    </citation>
    <scope>NUCLEOTIDE SEQUENCE [LARGE SCALE GENOMIC DNA]</scope>
    <source>
        <strain>536 / UPEC</strain>
    </source>
</reference>
<proteinExistence type="inferred from homology"/>
<evidence type="ECO:0000255" key="1">
    <source>
        <dbReference type="HAMAP-Rule" id="MF_01393"/>
    </source>
</evidence>
<accession>Q0TAX1</accession>
<protein>
    <recommendedName>
        <fullName evidence="1">ATP synthase subunit a</fullName>
    </recommendedName>
    <alternativeName>
        <fullName evidence="1">ATP synthase F0 sector subunit a</fullName>
    </alternativeName>
    <alternativeName>
        <fullName evidence="1">F-ATPase subunit 6</fullName>
    </alternativeName>
</protein>
<keyword id="KW-0066">ATP synthesis</keyword>
<keyword id="KW-0997">Cell inner membrane</keyword>
<keyword id="KW-1003">Cell membrane</keyword>
<keyword id="KW-0138">CF(0)</keyword>
<keyword id="KW-0375">Hydrogen ion transport</keyword>
<keyword id="KW-0406">Ion transport</keyword>
<keyword id="KW-0472">Membrane</keyword>
<keyword id="KW-0812">Transmembrane</keyword>
<keyword id="KW-1133">Transmembrane helix</keyword>
<keyword id="KW-0813">Transport</keyword>
<comment type="function">
    <text evidence="1">Key component of the proton channel; it plays a direct role in the translocation of protons across the membrane.</text>
</comment>
<comment type="subunit">
    <text evidence="1">F-type ATPases have 2 components, CF(1) - the catalytic core - and CF(0) - the membrane proton channel. CF(1) has five subunits: alpha(3), beta(3), gamma(1), delta(1), epsilon(1). CF(0) has three main subunits: a(1), b(2) and c(9-12). The alpha and beta chains form an alternating ring which encloses part of the gamma chain. CF(1) is attached to CF(0) by a central stalk formed by the gamma and epsilon chains, while a peripheral stalk is formed by the delta and b chains.</text>
</comment>
<comment type="subcellular location">
    <subcellularLocation>
        <location evidence="1">Cell inner membrane</location>
        <topology evidence="1">Multi-pass membrane protein</topology>
    </subcellularLocation>
</comment>
<comment type="similarity">
    <text evidence="1">Belongs to the ATPase A chain family.</text>
</comment>
<feature type="chain" id="PRO_0000362306" description="ATP synthase subunit a">
    <location>
        <begin position="1"/>
        <end position="271"/>
    </location>
</feature>
<feature type="transmembrane region" description="Helical" evidence="1">
    <location>
        <begin position="40"/>
        <end position="60"/>
    </location>
</feature>
<feature type="transmembrane region" description="Helical" evidence="1">
    <location>
        <begin position="100"/>
        <end position="120"/>
    </location>
</feature>
<feature type="transmembrane region" description="Helical" evidence="1">
    <location>
        <begin position="146"/>
        <end position="166"/>
    </location>
</feature>
<feature type="transmembrane region" description="Helical" evidence="1">
    <location>
        <begin position="220"/>
        <end position="240"/>
    </location>
</feature>
<feature type="transmembrane region" description="Helical" evidence="1">
    <location>
        <begin position="242"/>
        <end position="262"/>
    </location>
</feature>
<sequence>MASENMTPQDYIGHHLNNLQLDLRTFSLVDPHNPPATFWTINIDSMFFSVVLGLLFLVLFRSVAKKATSGVPGKFQTAIELVIGFVNGSVKDMYHGKSKLIAPLALTIFVWVFLMNLMDLLPIDLLPYIAEHVLGLPALRVVPSADVNVTLSMALGVFILILFYSIKMKGIGGFTKELTLQPFNHWAFIPVNLILEGVSLLSKPVSLGLRLFGNMYAGELIFILIAGLLPWWSQWILNVPWAIFHILIITLQAFIFMVLTIVYLSMASEEH</sequence>